<proteinExistence type="inferred from homology"/>
<organism>
    <name type="scientific">Burkholderia pseudomallei (strain 668)</name>
    <dbReference type="NCBI Taxonomy" id="320373"/>
    <lineage>
        <taxon>Bacteria</taxon>
        <taxon>Pseudomonadati</taxon>
        <taxon>Pseudomonadota</taxon>
        <taxon>Betaproteobacteria</taxon>
        <taxon>Burkholderiales</taxon>
        <taxon>Burkholderiaceae</taxon>
        <taxon>Burkholderia</taxon>
        <taxon>pseudomallei group</taxon>
    </lineage>
</organism>
<sequence>MYDLLKTIDDPADLRRLDRRQLQPLADELRAFVLDSVSKTGGHLSSNLGTVELTIALHYVFNTPDDRIVWDVGHQTYPHKILTGRRDGMKTLRQFDGISGFPRRSESEYDTFGTAHSSTSISAALGMAIGSKLNGDDRFSIAVIGDGAMTAGMAFEAMNNAGVSEDAKLLVILNDNDMSISPPVGALNRHLARLMSGRFYAAARAGVERVLSVAPPVLELARKLEEHAKGMVVPATLFEEFGFNYIGPIDGHDLDSLIPTLQNIKELRGPQFLHVVTKKGQGYKLAEADPVLYHGPGKFNPAEGIKPSTTPAKKTYTQVFGEWLCDAAELDARVVGITPAMREGSGMVEFEKRFPERYYDVGIAEQHAVTFAGGLATEGLKPVVAIYSTFLQRAYDQLIHDVALQNLPVVFAIDRAGLVGADGATHAGAYDLAFLRCIPNMTVMAASDENECRQMLHTALQQPNPTAVRYPRGAGTGVATVKAFTEIPLGKGEVRRRTSQPDGKRIAILAFGTMVAPSLAAADALDATVANMRFVKPIDAELVQALARTHDYLVTVEEGCVMGGAGSACVEAMMESGVVRPVLQLGLPDRFVDHGDPAKLLSLCGLDGDGIAKSIRERFLSHAADVASPAKRVA</sequence>
<reference key="1">
    <citation type="journal article" date="2010" name="Genome Biol. Evol.">
        <title>Continuing evolution of Burkholderia mallei through genome reduction and large-scale rearrangements.</title>
        <authorList>
            <person name="Losada L."/>
            <person name="Ronning C.M."/>
            <person name="DeShazer D."/>
            <person name="Woods D."/>
            <person name="Fedorova N."/>
            <person name="Kim H.S."/>
            <person name="Shabalina S.A."/>
            <person name="Pearson T.R."/>
            <person name="Brinkac L."/>
            <person name="Tan P."/>
            <person name="Nandi T."/>
            <person name="Crabtree J."/>
            <person name="Badger J."/>
            <person name="Beckstrom-Sternberg S."/>
            <person name="Saqib M."/>
            <person name="Schutzer S.E."/>
            <person name="Keim P."/>
            <person name="Nierman W.C."/>
        </authorList>
    </citation>
    <scope>NUCLEOTIDE SEQUENCE [LARGE SCALE GENOMIC DNA]</scope>
    <source>
        <strain>668</strain>
    </source>
</reference>
<gene>
    <name evidence="1" type="primary">dxs</name>
    <name type="ordered locus">BURPS668_A2534</name>
</gene>
<keyword id="KW-0414">Isoprene biosynthesis</keyword>
<keyword id="KW-0460">Magnesium</keyword>
<keyword id="KW-0479">Metal-binding</keyword>
<keyword id="KW-0784">Thiamine biosynthesis</keyword>
<keyword id="KW-0786">Thiamine pyrophosphate</keyword>
<keyword id="KW-0808">Transferase</keyword>
<accession>A3NMF6</accession>
<feature type="chain" id="PRO_1000019013" description="1-deoxy-D-xylulose-5-phosphate synthase">
    <location>
        <begin position="1"/>
        <end position="634"/>
    </location>
</feature>
<feature type="binding site" evidence="1">
    <location>
        <position position="74"/>
    </location>
    <ligand>
        <name>thiamine diphosphate</name>
        <dbReference type="ChEBI" id="CHEBI:58937"/>
    </ligand>
</feature>
<feature type="binding site" evidence="1">
    <location>
        <begin position="115"/>
        <end position="117"/>
    </location>
    <ligand>
        <name>thiamine diphosphate</name>
        <dbReference type="ChEBI" id="CHEBI:58937"/>
    </ligand>
</feature>
<feature type="binding site" evidence="1">
    <location>
        <position position="146"/>
    </location>
    <ligand>
        <name>Mg(2+)</name>
        <dbReference type="ChEBI" id="CHEBI:18420"/>
    </ligand>
</feature>
<feature type="binding site" evidence="1">
    <location>
        <begin position="147"/>
        <end position="148"/>
    </location>
    <ligand>
        <name>thiamine diphosphate</name>
        <dbReference type="ChEBI" id="CHEBI:58937"/>
    </ligand>
</feature>
<feature type="binding site" evidence="1">
    <location>
        <position position="176"/>
    </location>
    <ligand>
        <name>Mg(2+)</name>
        <dbReference type="ChEBI" id="CHEBI:18420"/>
    </ligand>
</feature>
<feature type="binding site" evidence="1">
    <location>
        <position position="176"/>
    </location>
    <ligand>
        <name>thiamine diphosphate</name>
        <dbReference type="ChEBI" id="CHEBI:58937"/>
    </ligand>
</feature>
<feature type="binding site" evidence="1">
    <location>
        <position position="283"/>
    </location>
    <ligand>
        <name>thiamine diphosphate</name>
        <dbReference type="ChEBI" id="CHEBI:58937"/>
    </ligand>
</feature>
<feature type="binding site" evidence="1">
    <location>
        <position position="365"/>
    </location>
    <ligand>
        <name>thiamine diphosphate</name>
        <dbReference type="ChEBI" id="CHEBI:58937"/>
    </ligand>
</feature>
<protein>
    <recommendedName>
        <fullName evidence="1">1-deoxy-D-xylulose-5-phosphate synthase</fullName>
        <ecNumber evidence="1">2.2.1.7</ecNumber>
    </recommendedName>
    <alternativeName>
        <fullName evidence="1">1-deoxyxylulose-5-phosphate synthase</fullName>
        <shortName evidence="1">DXP synthase</shortName>
        <shortName evidence="1">DXPS</shortName>
    </alternativeName>
</protein>
<dbReference type="EC" id="2.2.1.7" evidence="1"/>
<dbReference type="EMBL" id="CP000571">
    <property type="protein sequence ID" value="ABN86342.1"/>
    <property type="molecule type" value="Genomic_DNA"/>
</dbReference>
<dbReference type="RefSeq" id="WP_004540286.1">
    <property type="nucleotide sequence ID" value="NC_009075.1"/>
</dbReference>
<dbReference type="SMR" id="A3NMF6"/>
<dbReference type="KEGG" id="bpd:BURPS668_A2534"/>
<dbReference type="HOGENOM" id="CLU_009227_1_4_4"/>
<dbReference type="UniPathway" id="UPA00064">
    <property type="reaction ID" value="UER00091"/>
</dbReference>
<dbReference type="GO" id="GO:0005829">
    <property type="term" value="C:cytosol"/>
    <property type="evidence" value="ECO:0007669"/>
    <property type="project" value="TreeGrafter"/>
</dbReference>
<dbReference type="GO" id="GO:0008661">
    <property type="term" value="F:1-deoxy-D-xylulose-5-phosphate synthase activity"/>
    <property type="evidence" value="ECO:0007669"/>
    <property type="project" value="UniProtKB-UniRule"/>
</dbReference>
<dbReference type="GO" id="GO:0000287">
    <property type="term" value="F:magnesium ion binding"/>
    <property type="evidence" value="ECO:0007669"/>
    <property type="project" value="UniProtKB-UniRule"/>
</dbReference>
<dbReference type="GO" id="GO:0030976">
    <property type="term" value="F:thiamine pyrophosphate binding"/>
    <property type="evidence" value="ECO:0007669"/>
    <property type="project" value="UniProtKB-UniRule"/>
</dbReference>
<dbReference type="GO" id="GO:0052865">
    <property type="term" value="P:1-deoxy-D-xylulose 5-phosphate biosynthetic process"/>
    <property type="evidence" value="ECO:0007669"/>
    <property type="project" value="UniProtKB-UniPathway"/>
</dbReference>
<dbReference type="GO" id="GO:0019288">
    <property type="term" value="P:isopentenyl diphosphate biosynthetic process, methylerythritol 4-phosphate pathway"/>
    <property type="evidence" value="ECO:0007669"/>
    <property type="project" value="TreeGrafter"/>
</dbReference>
<dbReference type="GO" id="GO:0016114">
    <property type="term" value="P:terpenoid biosynthetic process"/>
    <property type="evidence" value="ECO:0007669"/>
    <property type="project" value="UniProtKB-UniRule"/>
</dbReference>
<dbReference type="GO" id="GO:0009228">
    <property type="term" value="P:thiamine biosynthetic process"/>
    <property type="evidence" value="ECO:0007669"/>
    <property type="project" value="UniProtKB-UniRule"/>
</dbReference>
<dbReference type="CDD" id="cd02007">
    <property type="entry name" value="TPP_DXS"/>
    <property type="match status" value="1"/>
</dbReference>
<dbReference type="CDD" id="cd07033">
    <property type="entry name" value="TPP_PYR_DXS_TK_like"/>
    <property type="match status" value="1"/>
</dbReference>
<dbReference type="FunFam" id="3.40.50.920:FF:000002">
    <property type="entry name" value="1-deoxy-D-xylulose-5-phosphate synthase"/>
    <property type="match status" value="1"/>
</dbReference>
<dbReference type="FunFam" id="3.40.50.970:FF:000005">
    <property type="entry name" value="1-deoxy-D-xylulose-5-phosphate synthase"/>
    <property type="match status" value="1"/>
</dbReference>
<dbReference type="Gene3D" id="3.40.50.920">
    <property type="match status" value="1"/>
</dbReference>
<dbReference type="Gene3D" id="3.40.50.970">
    <property type="match status" value="2"/>
</dbReference>
<dbReference type="HAMAP" id="MF_00315">
    <property type="entry name" value="DXP_synth"/>
    <property type="match status" value="1"/>
</dbReference>
<dbReference type="InterPro" id="IPR005477">
    <property type="entry name" value="Dxylulose-5-P_synthase"/>
</dbReference>
<dbReference type="InterPro" id="IPR029061">
    <property type="entry name" value="THDP-binding"/>
</dbReference>
<dbReference type="InterPro" id="IPR009014">
    <property type="entry name" value="Transketo_C/PFOR_II"/>
</dbReference>
<dbReference type="InterPro" id="IPR005475">
    <property type="entry name" value="Transketolase-like_Pyr-bd"/>
</dbReference>
<dbReference type="InterPro" id="IPR020826">
    <property type="entry name" value="Transketolase_BS"/>
</dbReference>
<dbReference type="InterPro" id="IPR033248">
    <property type="entry name" value="Transketolase_C"/>
</dbReference>
<dbReference type="InterPro" id="IPR049557">
    <property type="entry name" value="Transketolase_CS"/>
</dbReference>
<dbReference type="NCBIfam" id="TIGR00204">
    <property type="entry name" value="dxs"/>
    <property type="match status" value="1"/>
</dbReference>
<dbReference type="NCBIfam" id="NF003933">
    <property type="entry name" value="PRK05444.2-2"/>
    <property type="match status" value="1"/>
</dbReference>
<dbReference type="PANTHER" id="PTHR43322">
    <property type="entry name" value="1-D-DEOXYXYLULOSE 5-PHOSPHATE SYNTHASE-RELATED"/>
    <property type="match status" value="1"/>
</dbReference>
<dbReference type="PANTHER" id="PTHR43322:SF5">
    <property type="entry name" value="1-DEOXY-D-XYLULOSE-5-PHOSPHATE SYNTHASE, CHLOROPLASTIC"/>
    <property type="match status" value="1"/>
</dbReference>
<dbReference type="Pfam" id="PF13292">
    <property type="entry name" value="DXP_synthase_N"/>
    <property type="match status" value="1"/>
</dbReference>
<dbReference type="Pfam" id="PF02779">
    <property type="entry name" value="Transket_pyr"/>
    <property type="match status" value="1"/>
</dbReference>
<dbReference type="Pfam" id="PF02780">
    <property type="entry name" value="Transketolase_C"/>
    <property type="match status" value="1"/>
</dbReference>
<dbReference type="SMART" id="SM00861">
    <property type="entry name" value="Transket_pyr"/>
    <property type="match status" value="1"/>
</dbReference>
<dbReference type="SUPFAM" id="SSF52518">
    <property type="entry name" value="Thiamin diphosphate-binding fold (THDP-binding)"/>
    <property type="match status" value="2"/>
</dbReference>
<dbReference type="SUPFAM" id="SSF52922">
    <property type="entry name" value="TK C-terminal domain-like"/>
    <property type="match status" value="1"/>
</dbReference>
<dbReference type="PROSITE" id="PS00801">
    <property type="entry name" value="TRANSKETOLASE_1"/>
    <property type="match status" value="1"/>
</dbReference>
<dbReference type="PROSITE" id="PS00802">
    <property type="entry name" value="TRANSKETOLASE_2"/>
    <property type="match status" value="1"/>
</dbReference>
<name>DXS_BURP6</name>
<evidence type="ECO:0000255" key="1">
    <source>
        <dbReference type="HAMAP-Rule" id="MF_00315"/>
    </source>
</evidence>
<comment type="function">
    <text evidence="1">Catalyzes the acyloin condensation reaction between C atoms 2 and 3 of pyruvate and glyceraldehyde 3-phosphate to yield 1-deoxy-D-xylulose-5-phosphate (DXP).</text>
</comment>
<comment type="catalytic activity">
    <reaction evidence="1">
        <text>D-glyceraldehyde 3-phosphate + pyruvate + H(+) = 1-deoxy-D-xylulose 5-phosphate + CO2</text>
        <dbReference type="Rhea" id="RHEA:12605"/>
        <dbReference type="ChEBI" id="CHEBI:15361"/>
        <dbReference type="ChEBI" id="CHEBI:15378"/>
        <dbReference type="ChEBI" id="CHEBI:16526"/>
        <dbReference type="ChEBI" id="CHEBI:57792"/>
        <dbReference type="ChEBI" id="CHEBI:59776"/>
        <dbReference type="EC" id="2.2.1.7"/>
    </reaction>
</comment>
<comment type="cofactor">
    <cofactor evidence="1">
        <name>Mg(2+)</name>
        <dbReference type="ChEBI" id="CHEBI:18420"/>
    </cofactor>
    <text evidence="1">Binds 1 Mg(2+) ion per subunit.</text>
</comment>
<comment type="cofactor">
    <cofactor evidence="1">
        <name>thiamine diphosphate</name>
        <dbReference type="ChEBI" id="CHEBI:58937"/>
    </cofactor>
    <text evidence="1">Binds 1 thiamine pyrophosphate per subunit.</text>
</comment>
<comment type="pathway">
    <text evidence="1">Metabolic intermediate biosynthesis; 1-deoxy-D-xylulose 5-phosphate biosynthesis; 1-deoxy-D-xylulose 5-phosphate from D-glyceraldehyde 3-phosphate and pyruvate: step 1/1.</text>
</comment>
<comment type="subunit">
    <text evidence="1">Homodimer.</text>
</comment>
<comment type="similarity">
    <text evidence="1">Belongs to the transketolase family. DXPS subfamily.</text>
</comment>